<gene>
    <name type="primary">Klhdc8a</name>
</gene>
<name>KLD8A_MOUSE</name>
<organism>
    <name type="scientific">Mus musculus</name>
    <name type="common">Mouse</name>
    <dbReference type="NCBI Taxonomy" id="10090"/>
    <lineage>
        <taxon>Eukaryota</taxon>
        <taxon>Metazoa</taxon>
        <taxon>Chordata</taxon>
        <taxon>Craniata</taxon>
        <taxon>Vertebrata</taxon>
        <taxon>Euteleostomi</taxon>
        <taxon>Mammalia</taxon>
        <taxon>Eutheria</taxon>
        <taxon>Euarchontoglires</taxon>
        <taxon>Glires</taxon>
        <taxon>Rodentia</taxon>
        <taxon>Myomorpha</taxon>
        <taxon>Muroidea</taxon>
        <taxon>Muridae</taxon>
        <taxon>Murinae</taxon>
        <taxon>Mus</taxon>
        <taxon>Mus</taxon>
    </lineage>
</organism>
<dbReference type="EMBL" id="AK044318">
    <property type="protein sequence ID" value="BAC31864.1"/>
    <property type="molecule type" value="mRNA"/>
</dbReference>
<dbReference type="EMBL" id="AK080356">
    <property type="protein sequence ID" value="BAC37888.1"/>
    <property type="molecule type" value="mRNA"/>
</dbReference>
<dbReference type="EMBL" id="BC011135">
    <property type="protein sequence ID" value="AAH11135.1"/>
    <property type="molecule type" value="mRNA"/>
</dbReference>
<dbReference type="CCDS" id="CCDS35706.1"/>
<dbReference type="RefSeq" id="NP_659059.1">
    <property type="nucleotide sequence ID" value="NM_144810.6"/>
</dbReference>
<dbReference type="RefSeq" id="XP_006529417.1">
    <property type="nucleotide sequence ID" value="XM_006529354.5"/>
</dbReference>
<dbReference type="SMR" id="Q91XA8"/>
<dbReference type="BioGRID" id="229425">
    <property type="interactions" value="5"/>
</dbReference>
<dbReference type="FunCoup" id="Q91XA8">
    <property type="interactions" value="2"/>
</dbReference>
<dbReference type="STRING" id="10090.ENSMUSP00000038297"/>
<dbReference type="GlyGen" id="Q91XA8">
    <property type="glycosylation" value="2 sites"/>
</dbReference>
<dbReference type="iPTMnet" id="Q91XA8"/>
<dbReference type="PhosphoSitePlus" id="Q91XA8"/>
<dbReference type="PaxDb" id="10090-ENSMUSP00000038297"/>
<dbReference type="ProteomicsDB" id="264944"/>
<dbReference type="Pumba" id="Q91XA8"/>
<dbReference type="Antibodypedia" id="20678">
    <property type="antibodies" value="116 antibodies from 21 providers"/>
</dbReference>
<dbReference type="DNASU" id="213417"/>
<dbReference type="Ensembl" id="ENSMUST00000046071.5">
    <property type="protein sequence ID" value="ENSMUSP00000038297.5"/>
    <property type="gene ID" value="ENSMUSG00000042115.5"/>
</dbReference>
<dbReference type="GeneID" id="213417"/>
<dbReference type="KEGG" id="mmu:213417"/>
<dbReference type="UCSC" id="uc007con.1">
    <property type="organism name" value="mouse"/>
</dbReference>
<dbReference type="AGR" id="MGI:2442630"/>
<dbReference type="CTD" id="55220"/>
<dbReference type="MGI" id="MGI:2442630">
    <property type="gene designation" value="Klhdc8a"/>
</dbReference>
<dbReference type="VEuPathDB" id="HostDB:ENSMUSG00000042115"/>
<dbReference type="eggNOG" id="KOG1072">
    <property type="taxonomic scope" value="Eukaryota"/>
</dbReference>
<dbReference type="GeneTree" id="ENSGT00940000160742"/>
<dbReference type="HOGENOM" id="CLU_046864_0_0_1"/>
<dbReference type="InParanoid" id="Q91XA8"/>
<dbReference type="OMA" id="FPYPVHH"/>
<dbReference type="OrthoDB" id="45365at2759"/>
<dbReference type="PhylomeDB" id="Q91XA8"/>
<dbReference type="BioGRID-ORCS" id="213417">
    <property type="hits" value="4 hits in 78 CRISPR screens"/>
</dbReference>
<dbReference type="PRO" id="PR:Q91XA8"/>
<dbReference type="Proteomes" id="UP000000589">
    <property type="component" value="Chromosome 1"/>
</dbReference>
<dbReference type="RNAct" id="Q91XA8">
    <property type="molecule type" value="protein"/>
</dbReference>
<dbReference type="Bgee" id="ENSMUSG00000042115">
    <property type="expression patterns" value="Expressed in adrenal gland and 135 other cell types or tissues"/>
</dbReference>
<dbReference type="Gene3D" id="2.120.10.80">
    <property type="entry name" value="Kelch-type beta propeller"/>
    <property type="match status" value="2"/>
</dbReference>
<dbReference type="InterPro" id="IPR015915">
    <property type="entry name" value="Kelch-typ_b-propeller"/>
</dbReference>
<dbReference type="InterPro" id="IPR006652">
    <property type="entry name" value="Kelch_1"/>
</dbReference>
<dbReference type="InterPro" id="IPR051746">
    <property type="entry name" value="Kelch_domain_containing_8"/>
</dbReference>
<dbReference type="PANTHER" id="PTHR46260:SF1">
    <property type="entry name" value="KELCH DOMAIN-CONTAINING PROTEIN 8A"/>
    <property type="match status" value="1"/>
</dbReference>
<dbReference type="PANTHER" id="PTHR46260">
    <property type="entry name" value="RING-TYPE DOMAIN-CONTAINING PROTEIN"/>
    <property type="match status" value="1"/>
</dbReference>
<dbReference type="Pfam" id="PF01344">
    <property type="entry name" value="Kelch_1"/>
    <property type="match status" value="2"/>
</dbReference>
<dbReference type="Pfam" id="PF24681">
    <property type="entry name" value="Kelch_KLHDC2_KLHL20_DRC7"/>
    <property type="match status" value="1"/>
</dbReference>
<dbReference type="SMART" id="SM00612">
    <property type="entry name" value="Kelch"/>
    <property type="match status" value="5"/>
</dbReference>
<dbReference type="SUPFAM" id="SSF117281">
    <property type="entry name" value="Kelch motif"/>
    <property type="match status" value="2"/>
</dbReference>
<sequence>MEVPNVKDFQWKRLAPLPSRRVYCSLLETGGQVYAIGGCDDNGVPMDCFEVYSPEADQWTSLPSLPTARAGVAITALGKRIMVIGGVGTNQLPVKVVEMYNIDEGKWKKRSVLREAAMGISVTAKDYRVYAAGGMGLDLRPHNYLQHYDMLKDMWVSLAPMPTPRYAATSFLRGSKIYVLGGRQSKYAVNAFEVFDIESRSWTKFPNIPCKRAFSSFVTLDNHLYSLGGLRQGRLYRQPKFLRTMDVFDMEQGGWLKMERSFFLKKRRADFVAGGLSGRVIVAGGLGNQPTVLETAEAFHPEKNKWEALPPMPTPRCACSSIVFKNCLLAVGGVSQGLSDAVEALFVSDS</sequence>
<accession>Q91XA8</accession>
<protein>
    <recommendedName>
        <fullName>Kelch domain-containing protein 8A</fullName>
    </recommendedName>
</protein>
<proteinExistence type="evidence at transcript level"/>
<reference key="1">
    <citation type="journal article" date="2005" name="Science">
        <title>The transcriptional landscape of the mammalian genome.</title>
        <authorList>
            <person name="Carninci P."/>
            <person name="Kasukawa T."/>
            <person name="Katayama S."/>
            <person name="Gough J."/>
            <person name="Frith M.C."/>
            <person name="Maeda N."/>
            <person name="Oyama R."/>
            <person name="Ravasi T."/>
            <person name="Lenhard B."/>
            <person name="Wells C."/>
            <person name="Kodzius R."/>
            <person name="Shimokawa K."/>
            <person name="Bajic V.B."/>
            <person name="Brenner S.E."/>
            <person name="Batalov S."/>
            <person name="Forrest A.R."/>
            <person name="Zavolan M."/>
            <person name="Davis M.J."/>
            <person name="Wilming L.G."/>
            <person name="Aidinis V."/>
            <person name="Allen J.E."/>
            <person name="Ambesi-Impiombato A."/>
            <person name="Apweiler R."/>
            <person name="Aturaliya R.N."/>
            <person name="Bailey T.L."/>
            <person name="Bansal M."/>
            <person name="Baxter L."/>
            <person name="Beisel K.W."/>
            <person name="Bersano T."/>
            <person name="Bono H."/>
            <person name="Chalk A.M."/>
            <person name="Chiu K.P."/>
            <person name="Choudhary V."/>
            <person name="Christoffels A."/>
            <person name="Clutterbuck D.R."/>
            <person name="Crowe M.L."/>
            <person name="Dalla E."/>
            <person name="Dalrymple B.P."/>
            <person name="de Bono B."/>
            <person name="Della Gatta G."/>
            <person name="di Bernardo D."/>
            <person name="Down T."/>
            <person name="Engstrom P."/>
            <person name="Fagiolini M."/>
            <person name="Faulkner G."/>
            <person name="Fletcher C.F."/>
            <person name="Fukushima T."/>
            <person name="Furuno M."/>
            <person name="Futaki S."/>
            <person name="Gariboldi M."/>
            <person name="Georgii-Hemming P."/>
            <person name="Gingeras T.R."/>
            <person name="Gojobori T."/>
            <person name="Green R.E."/>
            <person name="Gustincich S."/>
            <person name="Harbers M."/>
            <person name="Hayashi Y."/>
            <person name="Hensch T.K."/>
            <person name="Hirokawa N."/>
            <person name="Hill D."/>
            <person name="Huminiecki L."/>
            <person name="Iacono M."/>
            <person name="Ikeo K."/>
            <person name="Iwama A."/>
            <person name="Ishikawa T."/>
            <person name="Jakt M."/>
            <person name="Kanapin A."/>
            <person name="Katoh M."/>
            <person name="Kawasawa Y."/>
            <person name="Kelso J."/>
            <person name="Kitamura H."/>
            <person name="Kitano H."/>
            <person name="Kollias G."/>
            <person name="Krishnan S.P."/>
            <person name="Kruger A."/>
            <person name="Kummerfeld S.K."/>
            <person name="Kurochkin I.V."/>
            <person name="Lareau L.F."/>
            <person name="Lazarevic D."/>
            <person name="Lipovich L."/>
            <person name="Liu J."/>
            <person name="Liuni S."/>
            <person name="McWilliam S."/>
            <person name="Madan Babu M."/>
            <person name="Madera M."/>
            <person name="Marchionni L."/>
            <person name="Matsuda H."/>
            <person name="Matsuzawa S."/>
            <person name="Miki H."/>
            <person name="Mignone F."/>
            <person name="Miyake S."/>
            <person name="Morris K."/>
            <person name="Mottagui-Tabar S."/>
            <person name="Mulder N."/>
            <person name="Nakano N."/>
            <person name="Nakauchi H."/>
            <person name="Ng P."/>
            <person name="Nilsson R."/>
            <person name="Nishiguchi S."/>
            <person name="Nishikawa S."/>
            <person name="Nori F."/>
            <person name="Ohara O."/>
            <person name="Okazaki Y."/>
            <person name="Orlando V."/>
            <person name="Pang K.C."/>
            <person name="Pavan W.J."/>
            <person name="Pavesi G."/>
            <person name="Pesole G."/>
            <person name="Petrovsky N."/>
            <person name="Piazza S."/>
            <person name="Reed J."/>
            <person name="Reid J.F."/>
            <person name="Ring B.Z."/>
            <person name="Ringwald M."/>
            <person name="Rost B."/>
            <person name="Ruan Y."/>
            <person name="Salzberg S.L."/>
            <person name="Sandelin A."/>
            <person name="Schneider C."/>
            <person name="Schoenbach C."/>
            <person name="Sekiguchi K."/>
            <person name="Semple C.A."/>
            <person name="Seno S."/>
            <person name="Sessa L."/>
            <person name="Sheng Y."/>
            <person name="Shibata Y."/>
            <person name="Shimada H."/>
            <person name="Shimada K."/>
            <person name="Silva D."/>
            <person name="Sinclair B."/>
            <person name="Sperling S."/>
            <person name="Stupka E."/>
            <person name="Sugiura K."/>
            <person name="Sultana R."/>
            <person name="Takenaka Y."/>
            <person name="Taki K."/>
            <person name="Tammoja K."/>
            <person name="Tan S.L."/>
            <person name="Tang S."/>
            <person name="Taylor M.S."/>
            <person name="Tegner J."/>
            <person name="Teichmann S.A."/>
            <person name="Ueda H.R."/>
            <person name="van Nimwegen E."/>
            <person name="Verardo R."/>
            <person name="Wei C.L."/>
            <person name="Yagi K."/>
            <person name="Yamanishi H."/>
            <person name="Zabarovsky E."/>
            <person name="Zhu S."/>
            <person name="Zimmer A."/>
            <person name="Hide W."/>
            <person name="Bult C."/>
            <person name="Grimmond S.M."/>
            <person name="Teasdale R.D."/>
            <person name="Liu E.T."/>
            <person name="Brusic V."/>
            <person name="Quackenbush J."/>
            <person name="Wahlestedt C."/>
            <person name="Mattick J.S."/>
            <person name="Hume D.A."/>
            <person name="Kai C."/>
            <person name="Sasaki D."/>
            <person name="Tomaru Y."/>
            <person name="Fukuda S."/>
            <person name="Kanamori-Katayama M."/>
            <person name="Suzuki M."/>
            <person name="Aoki J."/>
            <person name="Arakawa T."/>
            <person name="Iida J."/>
            <person name="Imamura K."/>
            <person name="Itoh M."/>
            <person name="Kato T."/>
            <person name="Kawaji H."/>
            <person name="Kawagashira N."/>
            <person name="Kawashima T."/>
            <person name="Kojima M."/>
            <person name="Kondo S."/>
            <person name="Konno H."/>
            <person name="Nakano K."/>
            <person name="Ninomiya N."/>
            <person name="Nishio T."/>
            <person name="Okada M."/>
            <person name="Plessy C."/>
            <person name="Shibata K."/>
            <person name="Shiraki T."/>
            <person name="Suzuki S."/>
            <person name="Tagami M."/>
            <person name="Waki K."/>
            <person name="Watahiki A."/>
            <person name="Okamura-Oho Y."/>
            <person name="Suzuki H."/>
            <person name="Kawai J."/>
            <person name="Hayashizaki Y."/>
        </authorList>
    </citation>
    <scope>NUCLEOTIDE SEQUENCE [LARGE SCALE MRNA]</scope>
    <source>
        <strain>C57BL/6J</strain>
        <tissue>Retina</tissue>
        <tissue>Thymus</tissue>
    </source>
</reference>
<reference key="2">
    <citation type="journal article" date="2004" name="Genome Res.">
        <title>The status, quality, and expansion of the NIH full-length cDNA project: the Mammalian Gene Collection (MGC).</title>
        <authorList>
            <consortium name="The MGC Project Team"/>
        </authorList>
    </citation>
    <scope>NUCLEOTIDE SEQUENCE [LARGE SCALE MRNA]</scope>
    <source>
        <strain>FVB/N</strain>
        <tissue>Salivary gland</tissue>
    </source>
</reference>
<keyword id="KW-0880">Kelch repeat</keyword>
<keyword id="KW-1185">Reference proteome</keyword>
<keyword id="KW-0677">Repeat</keyword>
<feature type="chain" id="PRO_0000229002" description="Kelch domain-containing protein 8A">
    <location>
        <begin position="1"/>
        <end position="350"/>
    </location>
</feature>
<feature type="repeat" description="Kelch 1">
    <location>
        <begin position="1"/>
        <end position="31"/>
    </location>
</feature>
<feature type="repeat" description="Kelch 2">
    <location>
        <begin position="32"/>
        <end position="79"/>
    </location>
</feature>
<feature type="repeat" description="Kelch 3">
    <location>
        <begin position="81"/>
        <end position="127"/>
    </location>
</feature>
<feature type="repeat" description="Kelch 4">
    <location>
        <begin position="128"/>
        <end position="175"/>
    </location>
</feature>
<feature type="repeat" description="Kelch 5">
    <location>
        <begin position="176"/>
        <end position="222"/>
    </location>
</feature>
<feature type="repeat" description="Kelch 6">
    <location>
        <begin position="224"/>
        <end position="278"/>
    </location>
</feature>
<feature type="repeat" description="Kelch 7">
    <location>
        <begin position="279"/>
        <end position="326"/>
    </location>
</feature>